<sequence>MAEEVRQELSALAAIFCGPNEWEMLSCSETDGAVFRIHTTAEGLVGEDVPLELAFHLPVGYPLCLPGISVTSEHLTRAQCVTAKEKLLGEARKLVSEPMVHELVLWIQQNLRLVLSQPETVSSHEKCTLPESATGDDGPWMTLLRLDHMRARTKYVKAVEKWASELRLTGRLMFMGKLILILLQGDRSNIKEYLILQKTSKVDVDSSGKKCKEKMISVLSETKVQTEHKRFLAFEVKEYSTLEELQKEFGAAGLGELFSECVLGLVK</sequence>
<protein>
    <recommendedName>
        <fullName>RWD domain-containing protein 3</fullName>
    </recommendedName>
    <alternativeName>
        <fullName>RWD domain-containing sumoylation enhancer</fullName>
        <shortName evidence="5">RSUME</shortName>
    </alternativeName>
</protein>
<comment type="function">
    <text evidence="4">Enhancer of SUMO conjugation. Via its interaction with UBE2I/UBC9, increases SUMO conjugation to proteins by promoting the binding of E1 and E2 enzymes, thioester linkage between SUMO and UBE2I/UBC9 and transfer of SUMO to specific target proteins which include HIF1A, PIAS, NFKBIA, NR3C1 and TOP1. Positively regulates the NF-kappa-B signaling pathway by enhancing the sumoylation of NF-kappa-B inhibitor alpha (NFKBIA), promoting its stabilization which consequently leads to an increased inhibition of NF-kappa-B transcriptional activity. Negatively regulates the hypoxia-inducible factor-1 alpha (HIF1A) signaling pathway by increasing the sumoylation of HIF1A, promoting its stabilization, transcriptional activity and the expression of its target gene VEGFA during hypoxia. Has no effect on ubiquitination.</text>
</comment>
<comment type="subunit">
    <text evidence="2">Interacts with UBE2I/UBC9, NFKBIA, HIF1A and NCOA2.</text>
</comment>
<comment type="subcellular location">
    <subcellularLocation>
        <location evidence="2">Nucleus</location>
    </subcellularLocation>
    <subcellularLocation>
        <location evidence="2">Cytoplasm</location>
    </subcellularLocation>
    <text evidence="1">Colocalizes with UBC9/UBE2I in nuclear spots.</text>
</comment>
<comment type="domain">
    <text evidence="1">The RWD domain is required for the sumoylation enhancement activity.</text>
</comment>
<gene>
    <name type="primary">Rwdd3</name>
    <name type="synonym">Rsume</name>
    <name type="synonym">X2cr1</name>
</gene>
<keyword id="KW-0963">Cytoplasm</keyword>
<keyword id="KW-0539">Nucleus</keyword>
<keyword id="KW-1185">Reference proteome</keyword>
<dbReference type="EMBL" id="AF439556">
    <property type="protein sequence ID" value="AAL35585.1"/>
    <property type="molecule type" value="mRNA"/>
</dbReference>
<dbReference type="EMBL" id="AK014130">
    <property type="protein sequence ID" value="BAB29171.2"/>
    <property type="molecule type" value="mRNA"/>
</dbReference>
<dbReference type="CCDS" id="CCDS17798.1"/>
<dbReference type="SMR" id="Q8VIL2"/>
<dbReference type="FunCoup" id="Q8VIL2">
    <property type="interactions" value="19"/>
</dbReference>
<dbReference type="PhosphoSitePlus" id="Q8VIL2"/>
<dbReference type="ProteomicsDB" id="255428"/>
<dbReference type="Pumba" id="Q8VIL2"/>
<dbReference type="AGR" id="MGI:1920420"/>
<dbReference type="MGI" id="MGI:1920420">
    <property type="gene designation" value="Rwdd3"/>
</dbReference>
<dbReference type="eggNOG" id="ENOG502S87K">
    <property type="taxonomic scope" value="Eukaryota"/>
</dbReference>
<dbReference type="InParanoid" id="Q8VIL2"/>
<dbReference type="PhylomeDB" id="Q8VIL2"/>
<dbReference type="PRO" id="PR:Q8VIL2"/>
<dbReference type="Proteomes" id="UP000000589">
    <property type="component" value="Unplaced"/>
</dbReference>
<dbReference type="RNAct" id="Q8VIL2">
    <property type="molecule type" value="protein"/>
</dbReference>
<dbReference type="GO" id="GO:0005737">
    <property type="term" value="C:cytoplasm"/>
    <property type="evidence" value="ECO:0007669"/>
    <property type="project" value="UniProtKB-SubCell"/>
</dbReference>
<dbReference type="GO" id="GO:0005634">
    <property type="term" value="C:nucleus"/>
    <property type="evidence" value="ECO:0007669"/>
    <property type="project" value="UniProtKB-SubCell"/>
</dbReference>
<dbReference type="GO" id="GO:0032088">
    <property type="term" value="P:negative regulation of NF-kappaB transcription factor activity"/>
    <property type="evidence" value="ECO:0000250"/>
    <property type="project" value="UniProtKB"/>
</dbReference>
<dbReference type="GO" id="GO:1902073">
    <property type="term" value="P:positive regulation of hypoxia-inducible factor-1alpha signaling pathway"/>
    <property type="evidence" value="ECO:0000315"/>
    <property type="project" value="MGI"/>
</dbReference>
<dbReference type="GO" id="GO:0033235">
    <property type="term" value="P:positive regulation of protein sumoylation"/>
    <property type="evidence" value="ECO:0000250"/>
    <property type="project" value="UniProtKB"/>
</dbReference>
<dbReference type="CDD" id="cd23819">
    <property type="entry name" value="RWD_RWDD3"/>
    <property type="match status" value="1"/>
</dbReference>
<dbReference type="CDD" id="cd24164">
    <property type="entry name" value="RWDD3_C"/>
    <property type="match status" value="1"/>
</dbReference>
<dbReference type="FunFam" id="3.10.110.10:FF:000070">
    <property type="entry name" value="RWD domain containing 3"/>
    <property type="match status" value="1"/>
</dbReference>
<dbReference type="Gene3D" id="3.10.110.10">
    <property type="entry name" value="Ubiquitin Conjugating Enzyme"/>
    <property type="match status" value="1"/>
</dbReference>
<dbReference type="InterPro" id="IPR006575">
    <property type="entry name" value="RWD_dom"/>
</dbReference>
<dbReference type="InterPro" id="IPR038840">
    <property type="entry name" value="RWDD3"/>
</dbReference>
<dbReference type="InterPro" id="IPR016135">
    <property type="entry name" value="UBQ-conjugating_enzyme/RWD"/>
</dbReference>
<dbReference type="PANTHER" id="PTHR15628">
    <property type="entry name" value="RWD DOMAIN-CONTAINING PROTEIN 3"/>
    <property type="match status" value="1"/>
</dbReference>
<dbReference type="PANTHER" id="PTHR15628:SF1">
    <property type="entry name" value="RWD DOMAIN-CONTAINING PROTEIN 3"/>
    <property type="match status" value="1"/>
</dbReference>
<dbReference type="Pfam" id="PF05773">
    <property type="entry name" value="RWD"/>
    <property type="match status" value="1"/>
</dbReference>
<dbReference type="SMART" id="SM00591">
    <property type="entry name" value="RWD"/>
    <property type="match status" value="1"/>
</dbReference>
<dbReference type="SUPFAM" id="SSF54495">
    <property type="entry name" value="UBC-like"/>
    <property type="match status" value="1"/>
</dbReference>
<dbReference type="PROSITE" id="PS50908">
    <property type="entry name" value="RWD"/>
    <property type="match status" value="1"/>
</dbReference>
<organism>
    <name type="scientific">Mus musculus</name>
    <name type="common">Mouse</name>
    <dbReference type="NCBI Taxonomy" id="10090"/>
    <lineage>
        <taxon>Eukaryota</taxon>
        <taxon>Metazoa</taxon>
        <taxon>Chordata</taxon>
        <taxon>Craniata</taxon>
        <taxon>Vertebrata</taxon>
        <taxon>Euteleostomi</taxon>
        <taxon>Mammalia</taxon>
        <taxon>Eutheria</taxon>
        <taxon>Euarchontoglires</taxon>
        <taxon>Glires</taxon>
        <taxon>Rodentia</taxon>
        <taxon>Myomorpha</taxon>
        <taxon>Muroidea</taxon>
        <taxon>Muridae</taxon>
        <taxon>Murinae</taxon>
        <taxon>Mus</taxon>
        <taxon>Mus</taxon>
    </lineage>
</organism>
<accession>Q8VIL2</accession>
<accession>Q9CXQ2</accession>
<evidence type="ECO:0000250" key="1"/>
<evidence type="ECO:0000250" key="2">
    <source>
        <dbReference type="UniProtKB" id="Q9Y3V2"/>
    </source>
</evidence>
<evidence type="ECO:0000255" key="3">
    <source>
        <dbReference type="PROSITE-ProRule" id="PRU00179"/>
    </source>
</evidence>
<evidence type="ECO:0000269" key="4">
    <source>
    </source>
</evidence>
<evidence type="ECO:0000303" key="5">
    <source>
    </source>
</evidence>
<evidence type="ECO:0000305" key="6"/>
<reference key="1">
    <citation type="submission" date="2001-10" db="EMBL/GenBank/DDBJ databases">
        <authorList>
            <person name="Paez-Pereda M."/>
            <person name="Perez-Castro C."/>
            <person name="Carbia-Nagashima A."/>
            <person name="Stalla G.K."/>
            <person name="Arzt E."/>
        </authorList>
    </citation>
    <scope>NUCLEOTIDE SEQUENCE [MRNA]</scope>
</reference>
<reference key="2">
    <citation type="journal article" date="2005" name="Science">
        <title>The transcriptional landscape of the mammalian genome.</title>
        <authorList>
            <person name="Carninci P."/>
            <person name="Kasukawa T."/>
            <person name="Katayama S."/>
            <person name="Gough J."/>
            <person name="Frith M.C."/>
            <person name="Maeda N."/>
            <person name="Oyama R."/>
            <person name="Ravasi T."/>
            <person name="Lenhard B."/>
            <person name="Wells C."/>
            <person name="Kodzius R."/>
            <person name="Shimokawa K."/>
            <person name="Bajic V.B."/>
            <person name="Brenner S.E."/>
            <person name="Batalov S."/>
            <person name="Forrest A.R."/>
            <person name="Zavolan M."/>
            <person name="Davis M.J."/>
            <person name="Wilming L.G."/>
            <person name="Aidinis V."/>
            <person name="Allen J.E."/>
            <person name="Ambesi-Impiombato A."/>
            <person name="Apweiler R."/>
            <person name="Aturaliya R.N."/>
            <person name="Bailey T.L."/>
            <person name="Bansal M."/>
            <person name="Baxter L."/>
            <person name="Beisel K.W."/>
            <person name="Bersano T."/>
            <person name="Bono H."/>
            <person name="Chalk A.M."/>
            <person name="Chiu K.P."/>
            <person name="Choudhary V."/>
            <person name="Christoffels A."/>
            <person name="Clutterbuck D.R."/>
            <person name="Crowe M.L."/>
            <person name="Dalla E."/>
            <person name="Dalrymple B.P."/>
            <person name="de Bono B."/>
            <person name="Della Gatta G."/>
            <person name="di Bernardo D."/>
            <person name="Down T."/>
            <person name="Engstrom P."/>
            <person name="Fagiolini M."/>
            <person name="Faulkner G."/>
            <person name="Fletcher C.F."/>
            <person name="Fukushima T."/>
            <person name="Furuno M."/>
            <person name="Futaki S."/>
            <person name="Gariboldi M."/>
            <person name="Georgii-Hemming P."/>
            <person name="Gingeras T.R."/>
            <person name="Gojobori T."/>
            <person name="Green R.E."/>
            <person name="Gustincich S."/>
            <person name="Harbers M."/>
            <person name="Hayashi Y."/>
            <person name="Hensch T.K."/>
            <person name="Hirokawa N."/>
            <person name="Hill D."/>
            <person name="Huminiecki L."/>
            <person name="Iacono M."/>
            <person name="Ikeo K."/>
            <person name="Iwama A."/>
            <person name="Ishikawa T."/>
            <person name="Jakt M."/>
            <person name="Kanapin A."/>
            <person name="Katoh M."/>
            <person name="Kawasawa Y."/>
            <person name="Kelso J."/>
            <person name="Kitamura H."/>
            <person name="Kitano H."/>
            <person name="Kollias G."/>
            <person name="Krishnan S.P."/>
            <person name="Kruger A."/>
            <person name="Kummerfeld S.K."/>
            <person name="Kurochkin I.V."/>
            <person name="Lareau L.F."/>
            <person name="Lazarevic D."/>
            <person name="Lipovich L."/>
            <person name="Liu J."/>
            <person name="Liuni S."/>
            <person name="McWilliam S."/>
            <person name="Madan Babu M."/>
            <person name="Madera M."/>
            <person name="Marchionni L."/>
            <person name="Matsuda H."/>
            <person name="Matsuzawa S."/>
            <person name="Miki H."/>
            <person name="Mignone F."/>
            <person name="Miyake S."/>
            <person name="Morris K."/>
            <person name="Mottagui-Tabar S."/>
            <person name="Mulder N."/>
            <person name="Nakano N."/>
            <person name="Nakauchi H."/>
            <person name="Ng P."/>
            <person name="Nilsson R."/>
            <person name="Nishiguchi S."/>
            <person name="Nishikawa S."/>
            <person name="Nori F."/>
            <person name="Ohara O."/>
            <person name="Okazaki Y."/>
            <person name="Orlando V."/>
            <person name="Pang K.C."/>
            <person name="Pavan W.J."/>
            <person name="Pavesi G."/>
            <person name="Pesole G."/>
            <person name="Petrovsky N."/>
            <person name="Piazza S."/>
            <person name="Reed J."/>
            <person name="Reid J.F."/>
            <person name="Ring B.Z."/>
            <person name="Ringwald M."/>
            <person name="Rost B."/>
            <person name="Ruan Y."/>
            <person name="Salzberg S.L."/>
            <person name="Sandelin A."/>
            <person name="Schneider C."/>
            <person name="Schoenbach C."/>
            <person name="Sekiguchi K."/>
            <person name="Semple C.A."/>
            <person name="Seno S."/>
            <person name="Sessa L."/>
            <person name="Sheng Y."/>
            <person name="Shibata Y."/>
            <person name="Shimada H."/>
            <person name="Shimada K."/>
            <person name="Silva D."/>
            <person name="Sinclair B."/>
            <person name="Sperling S."/>
            <person name="Stupka E."/>
            <person name="Sugiura K."/>
            <person name="Sultana R."/>
            <person name="Takenaka Y."/>
            <person name="Taki K."/>
            <person name="Tammoja K."/>
            <person name="Tan S.L."/>
            <person name="Tang S."/>
            <person name="Taylor M.S."/>
            <person name="Tegner J."/>
            <person name="Teichmann S.A."/>
            <person name="Ueda H.R."/>
            <person name="van Nimwegen E."/>
            <person name="Verardo R."/>
            <person name="Wei C.L."/>
            <person name="Yagi K."/>
            <person name="Yamanishi H."/>
            <person name="Zabarovsky E."/>
            <person name="Zhu S."/>
            <person name="Zimmer A."/>
            <person name="Hide W."/>
            <person name="Bult C."/>
            <person name="Grimmond S.M."/>
            <person name="Teasdale R.D."/>
            <person name="Liu E.T."/>
            <person name="Brusic V."/>
            <person name="Quackenbush J."/>
            <person name="Wahlestedt C."/>
            <person name="Mattick J.S."/>
            <person name="Hume D.A."/>
            <person name="Kai C."/>
            <person name="Sasaki D."/>
            <person name="Tomaru Y."/>
            <person name="Fukuda S."/>
            <person name="Kanamori-Katayama M."/>
            <person name="Suzuki M."/>
            <person name="Aoki J."/>
            <person name="Arakawa T."/>
            <person name="Iida J."/>
            <person name="Imamura K."/>
            <person name="Itoh M."/>
            <person name="Kato T."/>
            <person name="Kawaji H."/>
            <person name="Kawagashira N."/>
            <person name="Kawashima T."/>
            <person name="Kojima M."/>
            <person name="Kondo S."/>
            <person name="Konno H."/>
            <person name="Nakano K."/>
            <person name="Ninomiya N."/>
            <person name="Nishio T."/>
            <person name="Okada M."/>
            <person name="Plessy C."/>
            <person name="Shibata K."/>
            <person name="Shiraki T."/>
            <person name="Suzuki S."/>
            <person name="Tagami M."/>
            <person name="Waki K."/>
            <person name="Watahiki A."/>
            <person name="Okamura-Oho Y."/>
            <person name="Suzuki H."/>
            <person name="Kawai J."/>
            <person name="Hayashizaki Y."/>
        </authorList>
    </citation>
    <scope>NUCLEOTIDE SEQUENCE [LARGE SCALE MRNA] OF 16-267</scope>
    <source>
        <strain>C57BL/6J</strain>
        <tissue>Head</tissue>
    </source>
</reference>
<reference key="3">
    <citation type="journal article" date="2012" name="Endocr. Relat. Cancer">
        <title>RSUME is implicated in HIF-1-induced VEGF-A production in pituitary tumour cells.</title>
        <authorList>
            <person name="Shan B."/>
            <person name="Gerez J."/>
            <person name="Haedo M."/>
            <person name="Fuertes M."/>
            <person name="Theodoropoulou M."/>
            <person name="Buchfelder M."/>
            <person name="Losa M."/>
            <person name="Stalla G.K."/>
            <person name="Arzt E."/>
            <person name="Renner U."/>
        </authorList>
    </citation>
    <scope>FUNCTION</scope>
</reference>
<proteinExistence type="evidence at transcript level"/>
<name>RWDD3_MOUSE</name>
<feature type="chain" id="PRO_0000097546" description="RWD domain-containing protein 3">
    <location>
        <begin position="1"/>
        <end position="267"/>
    </location>
</feature>
<feature type="domain" description="RWD" evidence="3">
    <location>
        <begin position="7"/>
        <end position="114"/>
    </location>
</feature>
<feature type="region of interest" description="Interaction with UBE2I/UBC9" evidence="2">
    <location>
        <begin position="13"/>
        <end position="15"/>
    </location>
</feature>
<feature type="region of interest" description="Interaction with UBE2I/UBC9" evidence="2">
    <location>
        <begin position="100"/>
        <end position="102"/>
    </location>
</feature>
<feature type="sequence conflict" description="In Ref. 2; BAB29171." evidence="6" ref="2">
    <original>V</original>
    <variation>A</variation>
    <location>
        <position position="121"/>
    </location>
</feature>